<feature type="chain" id="PRO_1000061886" description="UPF0250 protein Rmag_0541">
    <location>
        <begin position="1"/>
        <end position="92"/>
    </location>
</feature>
<gene>
    <name type="ordered locus">Rmag_0541</name>
</gene>
<sequence length="92" mass="10619">MTTINLTSETLFNFPCDYHIKVLGKDCEALQRTIYSIVERYTDKLHPNQITKKHSSKGNYMSFSIHIIASSRIQLDAINQDLQDCHLVSYVL</sequence>
<reference key="1">
    <citation type="journal article" date="2007" name="Science">
        <title>The Calyptogena magnifica chemoautotrophic symbiont genome.</title>
        <authorList>
            <person name="Newton I.L.G."/>
            <person name="Woyke T."/>
            <person name="Auchtung T.A."/>
            <person name="Dilly G.F."/>
            <person name="Dutton R.J."/>
            <person name="Fisher M.C."/>
            <person name="Fontanez K.M."/>
            <person name="Lau E."/>
            <person name="Stewart F.J."/>
            <person name="Richardson P.M."/>
            <person name="Barry K.W."/>
            <person name="Saunders E."/>
            <person name="Detter J.C."/>
            <person name="Wu D."/>
            <person name="Eisen J.A."/>
            <person name="Cavanaugh C.M."/>
        </authorList>
    </citation>
    <scope>NUCLEOTIDE SEQUENCE [LARGE SCALE GENOMIC DNA]</scope>
</reference>
<accession>A1AWI6</accession>
<comment type="similarity">
    <text evidence="1">Belongs to the UPF0250 family.</text>
</comment>
<proteinExistence type="inferred from homology"/>
<evidence type="ECO:0000255" key="1">
    <source>
        <dbReference type="HAMAP-Rule" id="MF_00659"/>
    </source>
</evidence>
<dbReference type="EMBL" id="CP000488">
    <property type="protein sequence ID" value="ABL02293.1"/>
    <property type="molecule type" value="Genomic_DNA"/>
</dbReference>
<dbReference type="RefSeq" id="WP_011737918.1">
    <property type="nucleotide sequence ID" value="NC_008610.1"/>
</dbReference>
<dbReference type="SMR" id="A1AWI6"/>
<dbReference type="STRING" id="413404.Rmag_0541"/>
<dbReference type="KEGG" id="rma:Rmag_0541"/>
<dbReference type="eggNOG" id="COG2921">
    <property type="taxonomic scope" value="Bacteria"/>
</dbReference>
<dbReference type="HOGENOM" id="CLU_161438_1_2_6"/>
<dbReference type="OrthoDB" id="9793424at2"/>
<dbReference type="Proteomes" id="UP000002587">
    <property type="component" value="Chromosome"/>
</dbReference>
<dbReference type="GO" id="GO:0005829">
    <property type="term" value="C:cytosol"/>
    <property type="evidence" value="ECO:0007669"/>
    <property type="project" value="TreeGrafter"/>
</dbReference>
<dbReference type="Gene3D" id="3.30.70.260">
    <property type="match status" value="1"/>
</dbReference>
<dbReference type="HAMAP" id="MF_00659">
    <property type="entry name" value="UPF0250"/>
    <property type="match status" value="1"/>
</dbReference>
<dbReference type="InterPro" id="IPR007454">
    <property type="entry name" value="UPF0250_YbeD-like"/>
</dbReference>
<dbReference type="InterPro" id="IPR027471">
    <property type="entry name" value="YbeD-like_sf"/>
</dbReference>
<dbReference type="PANTHER" id="PTHR38036">
    <property type="entry name" value="UPF0250 PROTEIN YBED"/>
    <property type="match status" value="1"/>
</dbReference>
<dbReference type="PANTHER" id="PTHR38036:SF1">
    <property type="entry name" value="UPF0250 PROTEIN YBED"/>
    <property type="match status" value="1"/>
</dbReference>
<dbReference type="Pfam" id="PF04359">
    <property type="entry name" value="DUF493"/>
    <property type="match status" value="1"/>
</dbReference>
<dbReference type="SUPFAM" id="SSF117991">
    <property type="entry name" value="YbeD/HP0495-like"/>
    <property type="match status" value="1"/>
</dbReference>
<protein>
    <recommendedName>
        <fullName evidence="1">UPF0250 protein Rmag_0541</fullName>
    </recommendedName>
</protein>
<organism>
    <name type="scientific">Ruthia magnifica subsp. Calyptogena magnifica</name>
    <dbReference type="NCBI Taxonomy" id="413404"/>
    <lineage>
        <taxon>Bacteria</taxon>
        <taxon>Pseudomonadati</taxon>
        <taxon>Pseudomonadota</taxon>
        <taxon>Gammaproteobacteria</taxon>
        <taxon>Candidatus Pseudothioglobaceae</taxon>
        <taxon>Candidatus Ruthturnera</taxon>
    </lineage>
</organism>
<name>Y541_RUTMC</name>